<name>IGF1_AILFU</name>
<accession>Q6IVA5</accession>
<feature type="signal peptide" evidence="5">
    <location>
        <begin position="1"/>
        <end status="unknown"/>
    </location>
</feature>
<feature type="propeptide" id="PRO_0000015641" evidence="1">
    <location>
        <begin status="unknown"/>
        <end position="48"/>
    </location>
</feature>
<feature type="chain" id="PRO_0000015642" description="Insulin-like growth factor 1">
    <location>
        <begin position="49"/>
        <end position="118"/>
    </location>
</feature>
<feature type="propeptide" id="PRO_0000015643" description="E peptide">
    <location>
        <begin position="119"/>
        <end position="153"/>
    </location>
</feature>
<feature type="region of interest" description="B">
    <location>
        <begin position="49"/>
        <end position="77"/>
    </location>
</feature>
<feature type="region of interest" description="C">
    <location>
        <begin position="78"/>
        <end position="89"/>
    </location>
</feature>
<feature type="region of interest" description="A">
    <location>
        <begin position="90"/>
        <end position="110"/>
    </location>
</feature>
<feature type="region of interest" description="D">
    <location>
        <begin position="111"/>
        <end position="118"/>
    </location>
</feature>
<feature type="region of interest" description="Disordered" evidence="6">
    <location>
        <begin position="120"/>
        <end position="153"/>
    </location>
</feature>
<feature type="compositionally biased region" description="Basic and acidic residues" evidence="6">
    <location>
        <begin position="125"/>
        <end position="138"/>
    </location>
</feature>
<feature type="compositionally biased region" description="Polar residues" evidence="6">
    <location>
        <begin position="142"/>
        <end position="153"/>
    </location>
</feature>
<feature type="disulfide bond" evidence="3">
    <location>
        <begin position="54"/>
        <end position="96"/>
    </location>
</feature>
<feature type="disulfide bond" evidence="3">
    <location>
        <begin position="66"/>
        <end position="109"/>
    </location>
</feature>
<feature type="disulfide bond" evidence="3">
    <location>
        <begin position="95"/>
        <end position="100"/>
    </location>
</feature>
<evidence type="ECO:0000250" key="1"/>
<evidence type="ECO:0000250" key="2">
    <source>
        <dbReference type="UniProtKB" id="P05017"/>
    </source>
</evidence>
<evidence type="ECO:0000250" key="3">
    <source>
        <dbReference type="UniProtKB" id="P05019"/>
    </source>
</evidence>
<evidence type="ECO:0000250" key="4">
    <source>
        <dbReference type="UniProtKB" id="P08025"/>
    </source>
</evidence>
<evidence type="ECO:0000255" key="5"/>
<evidence type="ECO:0000256" key="6">
    <source>
        <dbReference type="SAM" id="MobiDB-lite"/>
    </source>
</evidence>
<evidence type="ECO:0000303" key="7">
    <source ref="1"/>
</evidence>
<evidence type="ECO:0000305" key="8"/>
<reference key="1">
    <citation type="submission" date="2004-08" db="EMBL/GenBank/DDBJ databases">
        <title>Cloning and expression of red panda IGF-I.</title>
        <authorList>
            <person name="Hu X."/>
            <person name="Zhang Z."/>
            <person name="Zhu M."/>
            <person name="Fan W."/>
            <person name="Zhang A."/>
        </authorList>
    </citation>
    <scope>NUCLEOTIDE SEQUENCE [MRNA]</scope>
    <source>
        <tissue>Liver</tissue>
    </source>
</reference>
<protein>
    <recommendedName>
        <fullName evidence="3">Insulin-like growth factor 1</fullName>
    </recommendedName>
    <alternativeName>
        <fullName evidence="7">Insulin-like growth factor I</fullName>
        <shortName evidence="7">IGF-I</shortName>
    </alternativeName>
    <alternativeName>
        <fullName>Somatomedin</fullName>
    </alternativeName>
</protein>
<gene>
    <name evidence="3" type="primary">IGF1</name>
    <name evidence="3" type="synonym">IGF-1</name>
</gene>
<comment type="function">
    <text evidence="2 3 4">The insulin-like growth factors, isolated from plasma, are structurally and functionally related to insulin but have a much higher growth-promoting activity. May be a physiological regulator of [1-14C]-2-deoxy-D-glucose (2DG) transport and glycogen synthesis in osteoblasts. Stimulates glucose transport in bone-derived osteoblastic (PyMS) cells and is effective at much lower concentrations than insulin, not only regarding glycogen and DNA synthesis but also with regard to enhancing glucose uptake. May play a role in synapse maturation. Ca(2+)-dependent exocytosis of IGF1 is required for sensory perception of smell in the olfactory bulb. Acts as a ligand for IGF1R. Binds to the alpha subunit of IGF1R, leading to the activation of the intrinsic tyrosine kinase activity which autophosphorylates tyrosine residues in the beta subunit thus initiating a cascade of down-stream signaling events leading to activation of the PI3K-AKT/PKB and the Ras-MAPK pathways. Binds to integrins ITGAV:ITGB3 and ITGA6:ITGB4. Its binding to integrins and subsequent ternary complex formation with integrins and IGFR1 are essential for IGF1 signaling. Induces the phosphorylation and activation of IGFR1, MAPK3/ERK1, MAPK1/ERK2 and AKT1 (By similarity). As part of the MAPK/ERK signaling pathway, acts as a negative regulator of apoptosis in cardiomyocytes via promotion of STUB1/CHIP-mediated ubiquitination and degradation of ICER-type isoforms of CREM (By similarity).</text>
</comment>
<comment type="subunit">
    <text evidence="3">Forms a ternary complex with IGFR1 and ITGAV:ITGB3. Forms a ternary complex with IGFR1 and ITGA6:ITGB4. Forms a ternary complex with IGFBP3 and ALS.</text>
</comment>
<comment type="subcellular location">
    <subcellularLocation>
        <location evidence="2">Secreted</location>
    </subcellularLocation>
</comment>
<comment type="similarity">
    <text evidence="8">Belongs to the insulin family.</text>
</comment>
<organism>
    <name type="scientific">Ailurus fulgens</name>
    <name type="common">Himalayan red panda</name>
    <dbReference type="NCBI Taxonomy" id="9649"/>
    <lineage>
        <taxon>Eukaryota</taxon>
        <taxon>Metazoa</taxon>
        <taxon>Chordata</taxon>
        <taxon>Craniata</taxon>
        <taxon>Vertebrata</taxon>
        <taxon>Euteleostomi</taxon>
        <taxon>Mammalia</taxon>
        <taxon>Eutheria</taxon>
        <taxon>Laurasiatheria</taxon>
        <taxon>Carnivora</taxon>
        <taxon>Caniformia</taxon>
        <taxon>Musteloidea</taxon>
        <taxon>Ailuridae</taxon>
        <taxon>Ailurus</taxon>
    </lineage>
</organism>
<sequence length="153" mass="16974">MGKISSLPTQLFKCCFCDFLKVKMHIMSSSHLLYLALCLLTFTSSATAGPETLCGAELVDALQFVCGDRGFYFNKPTGYGSSSRRAPQTGIVDECCFRSCDLRRLEMYCAPLKPAKSARSVRAQRHTDMPKAQKEVHLKNASRGSAGNKNYRM</sequence>
<proteinExistence type="evidence at transcript level"/>
<keyword id="KW-1015">Disulfide bond</keyword>
<keyword id="KW-0339">Growth factor</keyword>
<keyword id="KW-0964">Secreted</keyword>
<keyword id="KW-0732">Signal</keyword>
<dbReference type="EMBL" id="AY620956">
    <property type="protein sequence ID" value="AAT40413.2"/>
    <property type="molecule type" value="mRNA"/>
</dbReference>
<dbReference type="SMR" id="Q6IVA5"/>
<dbReference type="GO" id="GO:0035867">
    <property type="term" value="C:alphav-beta3 integrin-IGF-1-IGF1R complex"/>
    <property type="evidence" value="ECO:0000250"/>
    <property type="project" value="UniProtKB"/>
</dbReference>
<dbReference type="GO" id="GO:0070382">
    <property type="term" value="C:exocytic vesicle"/>
    <property type="evidence" value="ECO:0000250"/>
    <property type="project" value="UniProtKB"/>
</dbReference>
<dbReference type="GO" id="GO:0005615">
    <property type="term" value="C:extracellular space"/>
    <property type="evidence" value="ECO:0007669"/>
    <property type="project" value="InterPro"/>
</dbReference>
<dbReference type="GO" id="GO:0008083">
    <property type="term" value="F:growth factor activity"/>
    <property type="evidence" value="ECO:0007669"/>
    <property type="project" value="UniProtKB-KW"/>
</dbReference>
<dbReference type="GO" id="GO:0005179">
    <property type="term" value="F:hormone activity"/>
    <property type="evidence" value="ECO:0007669"/>
    <property type="project" value="InterPro"/>
</dbReference>
<dbReference type="GO" id="GO:0005159">
    <property type="term" value="F:insulin-like growth factor receptor binding"/>
    <property type="evidence" value="ECO:0000250"/>
    <property type="project" value="UniProtKB"/>
</dbReference>
<dbReference type="GO" id="GO:0008283">
    <property type="term" value="P:cell population proliferation"/>
    <property type="evidence" value="ECO:0007669"/>
    <property type="project" value="TreeGrafter"/>
</dbReference>
<dbReference type="GO" id="GO:0048009">
    <property type="term" value="P:insulin-like growth factor receptor signaling pathway"/>
    <property type="evidence" value="ECO:0000250"/>
    <property type="project" value="UniProtKB"/>
</dbReference>
<dbReference type="GO" id="GO:0043066">
    <property type="term" value="P:negative regulation of apoptotic process"/>
    <property type="evidence" value="ECO:0000250"/>
    <property type="project" value="UniProtKB"/>
</dbReference>
<dbReference type="GO" id="GO:0090201">
    <property type="term" value="P:negative regulation of release of cytochrome c from mitochondria"/>
    <property type="evidence" value="ECO:0000250"/>
    <property type="project" value="UniProtKB"/>
</dbReference>
<dbReference type="GO" id="GO:0034392">
    <property type="term" value="P:negative regulation of smooth muscle cell apoptotic process"/>
    <property type="evidence" value="ECO:0000250"/>
    <property type="project" value="UniProtKB"/>
</dbReference>
<dbReference type="GO" id="GO:0008284">
    <property type="term" value="P:positive regulation of cell population proliferation"/>
    <property type="evidence" value="ECO:0000250"/>
    <property type="project" value="UniProtKB"/>
</dbReference>
<dbReference type="GO" id="GO:0046326">
    <property type="term" value="P:positive regulation of D-glucose import"/>
    <property type="evidence" value="ECO:0000250"/>
    <property type="project" value="UniProtKB"/>
</dbReference>
<dbReference type="GO" id="GO:0045725">
    <property type="term" value="P:positive regulation of glycogen biosynthetic process"/>
    <property type="evidence" value="ECO:0000250"/>
    <property type="project" value="UniProtKB"/>
</dbReference>
<dbReference type="GO" id="GO:0043410">
    <property type="term" value="P:positive regulation of MAPK cascade"/>
    <property type="evidence" value="ECO:0000250"/>
    <property type="project" value="UniProtKB"/>
</dbReference>
<dbReference type="GO" id="GO:0051897">
    <property type="term" value="P:positive regulation of phosphatidylinositol 3-kinase/protein kinase B signal transduction"/>
    <property type="evidence" value="ECO:0007669"/>
    <property type="project" value="TreeGrafter"/>
</dbReference>
<dbReference type="CDD" id="cd04368">
    <property type="entry name" value="IlGF"/>
    <property type="match status" value="1"/>
</dbReference>
<dbReference type="FunFam" id="1.10.100.10:FF:000001">
    <property type="entry name" value="insulin-like growth factor I isoform X1"/>
    <property type="match status" value="1"/>
</dbReference>
<dbReference type="Gene3D" id="1.10.100.10">
    <property type="entry name" value="Insulin-like"/>
    <property type="match status" value="1"/>
</dbReference>
<dbReference type="InterPro" id="IPR022341">
    <property type="entry name" value="IGF-I"/>
</dbReference>
<dbReference type="InterPro" id="IPR016179">
    <property type="entry name" value="Insulin-like"/>
</dbReference>
<dbReference type="InterPro" id="IPR022350">
    <property type="entry name" value="Insulin-like_growth_factor"/>
</dbReference>
<dbReference type="InterPro" id="IPR036438">
    <property type="entry name" value="Insulin-like_sf"/>
</dbReference>
<dbReference type="InterPro" id="IPR022353">
    <property type="entry name" value="Insulin_CS"/>
</dbReference>
<dbReference type="InterPro" id="IPR022352">
    <property type="entry name" value="Insulin_family"/>
</dbReference>
<dbReference type="PANTHER" id="PTHR46845">
    <property type="entry name" value="INSULIN-LIKE GROWTH FACTOR I"/>
    <property type="match status" value="1"/>
</dbReference>
<dbReference type="PANTHER" id="PTHR46845:SF1">
    <property type="entry name" value="INSULIN-LIKE GROWTH FACTOR I"/>
    <property type="match status" value="1"/>
</dbReference>
<dbReference type="Pfam" id="PF00049">
    <property type="entry name" value="Insulin"/>
    <property type="match status" value="1"/>
</dbReference>
<dbReference type="PRINTS" id="PR02002">
    <property type="entry name" value="INSLNLIKEGF"/>
</dbReference>
<dbReference type="PRINTS" id="PR02005">
    <property type="entry name" value="INSLNLIKEGF1"/>
</dbReference>
<dbReference type="PRINTS" id="PR00276">
    <property type="entry name" value="INSULINFAMLY"/>
</dbReference>
<dbReference type="SMART" id="SM00078">
    <property type="entry name" value="IlGF"/>
    <property type="match status" value="1"/>
</dbReference>
<dbReference type="SUPFAM" id="SSF56994">
    <property type="entry name" value="Insulin-like"/>
    <property type="match status" value="1"/>
</dbReference>
<dbReference type="PROSITE" id="PS00262">
    <property type="entry name" value="INSULIN"/>
    <property type="match status" value="1"/>
</dbReference>